<keyword id="KW-0012">Acyltransferase</keyword>
<keyword id="KW-0998">Cell outer membrane</keyword>
<keyword id="KW-0472">Membrane</keyword>
<keyword id="KW-1185">Reference proteome</keyword>
<keyword id="KW-0732">Signal</keyword>
<keyword id="KW-0808">Transferase</keyword>
<accession>Q8D091</accession>
<accession>Q0WG44</accession>
<accession>Q74V48</accession>
<comment type="function">
    <text evidence="1">Transfers a fatty acid residue from the sn-1 position of a phospholipid to the N-linked hydroxyfatty acid chain on the proximal unit of lipid A or its precursors.</text>
</comment>
<comment type="catalytic activity">
    <reaction evidence="1">
        <text>a lipid A + a 1,2-diacyl-sn-glycero-3-phosphocholine = a hepta-acyl lipid A + a 2-acyl-sn-glycero-3-phosphocholine</text>
        <dbReference type="Rhea" id="RHEA:74275"/>
        <dbReference type="ChEBI" id="CHEBI:57643"/>
        <dbReference type="ChEBI" id="CHEBI:57875"/>
        <dbReference type="ChEBI" id="CHEBI:193141"/>
        <dbReference type="ChEBI" id="CHEBI:193142"/>
        <dbReference type="EC" id="2.3.1.251"/>
    </reaction>
</comment>
<comment type="catalytic activity">
    <reaction evidence="1">
        <text>a lipid IVA + a 1,2-diacyl-sn-glycero-3-phosphocholine = a lipid IVB + a 2-acyl-sn-glycero-3-phosphocholine</text>
        <dbReference type="Rhea" id="RHEA:74279"/>
        <dbReference type="ChEBI" id="CHEBI:57643"/>
        <dbReference type="ChEBI" id="CHEBI:57875"/>
        <dbReference type="ChEBI" id="CHEBI:176425"/>
        <dbReference type="ChEBI" id="CHEBI:193143"/>
        <dbReference type="EC" id="2.3.1.251"/>
    </reaction>
</comment>
<comment type="catalytic activity">
    <reaction evidence="1">
        <text>a lipid IIA + a 1,2-diacyl-sn-glycero-3-phosphocholine = a lipid IIB + a 2-acyl-sn-glycero-3-phosphocholine</text>
        <dbReference type="Rhea" id="RHEA:74283"/>
        <dbReference type="ChEBI" id="CHEBI:57643"/>
        <dbReference type="ChEBI" id="CHEBI:57875"/>
        <dbReference type="ChEBI" id="CHEBI:193144"/>
        <dbReference type="ChEBI" id="CHEBI:193145"/>
        <dbReference type="EC" id="2.3.1.251"/>
    </reaction>
</comment>
<comment type="subunit">
    <text evidence="1">Homodimer.</text>
</comment>
<comment type="subcellular location">
    <subcellularLocation>
        <location evidence="1">Cell outer membrane</location>
    </subcellularLocation>
</comment>
<comment type="similarity">
    <text evidence="1 2">Belongs to the lipid A palmitoyltransferase family.</text>
</comment>
<comment type="caution">
    <text evidence="3">This gene is probably a pseudogene. In contrast to other members of the family, Y.pestis PagP is truncated by a deletion of the last three amino acid residues which contribute to key hydrogen bonds in the inner leaflet exposed region. Consequently, it seems highly unlikely that the truncated PagP is capable of folding into a beta-barrel in the outer membrane (OM).</text>
</comment>
<comment type="sequence caution" evidence="2">
    <conflict type="erroneous initiation">
        <sequence resource="EMBL-CDS" id="AAM86118"/>
    </conflict>
    <text>Extended N-terminus.</text>
</comment>
<comment type="sequence caution" evidence="2">
    <conflict type="erroneous initiation">
        <sequence resource="EMBL-CDS" id="AAS61724"/>
    </conflict>
    <text>Extended N-terminus.</text>
</comment>
<organism>
    <name type="scientific">Yersinia pestis</name>
    <dbReference type="NCBI Taxonomy" id="632"/>
    <lineage>
        <taxon>Bacteria</taxon>
        <taxon>Pseudomonadati</taxon>
        <taxon>Pseudomonadota</taxon>
        <taxon>Gammaproteobacteria</taxon>
        <taxon>Enterobacterales</taxon>
        <taxon>Yersiniaceae</taxon>
        <taxon>Yersinia</taxon>
    </lineage>
</organism>
<gene>
    <name evidence="1" type="primary">pagP</name>
    <name type="synonym">crcA</name>
    <name type="ordered locus">YPO1744</name>
    <name type="ordered locus">y2563</name>
    <name type="ordered locus">YP_1485</name>
</gene>
<reference key="1">
    <citation type="journal article" date="2001" name="Nature">
        <title>Genome sequence of Yersinia pestis, the causative agent of plague.</title>
        <authorList>
            <person name="Parkhill J."/>
            <person name="Wren B.W."/>
            <person name="Thomson N.R."/>
            <person name="Titball R.W."/>
            <person name="Holden M.T.G."/>
            <person name="Prentice M.B."/>
            <person name="Sebaihia M."/>
            <person name="James K.D."/>
            <person name="Churcher C.M."/>
            <person name="Mungall K.L."/>
            <person name="Baker S."/>
            <person name="Basham D."/>
            <person name="Bentley S.D."/>
            <person name="Brooks K."/>
            <person name="Cerdeno-Tarraga A.-M."/>
            <person name="Chillingworth T."/>
            <person name="Cronin A."/>
            <person name="Davies R.M."/>
            <person name="Davis P."/>
            <person name="Dougan G."/>
            <person name="Feltwell T."/>
            <person name="Hamlin N."/>
            <person name="Holroyd S."/>
            <person name="Jagels K."/>
            <person name="Karlyshev A.V."/>
            <person name="Leather S."/>
            <person name="Moule S."/>
            <person name="Oyston P.C.F."/>
            <person name="Quail M.A."/>
            <person name="Rutherford K.M."/>
            <person name="Simmonds M."/>
            <person name="Skelton J."/>
            <person name="Stevens K."/>
            <person name="Whitehead S."/>
            <person name="Barrell B.G."/>
        </authorList>
    </citation>
    <scope>NUCLEOTIDE SEQUENCE [LARGE SCALE GENOMIC DNA]</scope>
    <source>
        <strain>CO-92 / Biovar Orientalis</strain>
    </source>
</reference>
<reference key="2">
    <citation type="journal article" date="2002" name="J. Bacteriol.">
        <title>Genome sequence of Yersinia pestis KIM.</title>
        <authorList>
            <person name="Deng W."/>
            <person name="Burland V."/>
            <person name="Plunkett G. III"/>
            <person name="Boutin A."/>
            <person name="Mayhew G.F."/>
            <person name="Liss P."/>
            <person name="Perna N.T."/>
            <person name="Rose D.J."/>
            <person name="Mau B."/>
            <person name="Zhou S."/>
            <person name="Schwartz D.C."/>
            <person name="Fetherston J.D."/>
            <person name="Lindler L.E."/>
            <person name="Brubaker R.R."/>
            <person name="Plano G.V."/>
            <person name="Straley S.C."/>
            <person name="McDonough K.A."/>
            <person name="Nilles M.L."/>
            <person name="Matson J.S."/>
            <person name="Blattner F.R."/>
            <person name="Perry R.D."/>
        </authorList>
    </citation>
    <scope>NUCLEOTIDE SEQUENCE [LARGE SCALE GENOMIC DNA]</scope>
    <source>
        <strain>KIM10+ / Biovar Mediaevalis</strain>
    </source>
</reference>
<reference key="3">
    <citation type="journal article" date="2004" name="DNA Res.">
        <title>Complete genome sequence of Yersinia pestis strain 91001, an isolate avirulent to humans.</title>
        <authorList>
            <person name="Song Y."/>
            <person name="Tong Z."/>
            <person name="Wang J."/>
            <person name="Wang L."/>
            <person name="Guo Z."/>
            <person name="Han Y."/>
            <person name="Zhang J."/>
            <person name="Pei D."/>
            <person name="Zhou D."/>
            <person name="Qin H."/>
            <person name="Pang X."/>
            <person name="Han Y."/>
            <person name="Zhai J."/>
            <person name="Li M."/>
            <person name="Cui B."/>
            <person name="Qi Z."/>
            <person name="Jin L."/>
            <person name="Dai R."/>
            <person name="Chen F."/>
            <person name="Li S."/>
            <person name="Ye C."/>
            <person name="Du Z."/>
            <person name="Lin W."/>
            <person name="Wang J."/>
            <person name="Yu J."/>
            <person name="Yang H."/>
            <person name="Wang J."/>
            <person name="Huang P."/>
            <person name="Yang R."/>
        </authorList>
    </citation>
    <scope>NUCLEOTIDE SEQUENCE [LARGE SCALE GENOMIC DNA]</scope>
    <source>
        <strain>91001 / Biovar Mediaevalis</strain>
    </source>
</reference>
<reference key="4">
    <citation type="journal article" date="2005" name="Mol. Microbiol.">
        <title>The lipid A palmitoyltransferase PagP: molecular mechanisms and role in bacterial pathogenesis.</title>
        <authorList>
            <person name="Bishop R.E."/>
        </authorList>
    </citation>
    <scope>CAUTION</scope>
</reference>
<dbReference type="EC" id="2.3.1.251" evidence="1"/>
<dbReference type="EMBL" id="AL590842">
    <property type="protein sequence ID" value="CAL20386.1"/>
    <property type="molecule type" value="Genomic_DNA"/>
</dbReference>
<dbReference type="EMBL" id="AE009952">
    <property type="protein sequence ID" value="AAM86118.1"/>
    <property type="status" value="ALT_INIT"/>
    <property type="molecule type" value="Genomic_DNA"/>
</dbReference>
<dbReference type="EMBL" id="AE017042">
    <property type="protein sequence ID" value="AAS61724.1"/>
    <property type="status" value="ALT_INIT"/>
    <property type="molecule type" value="Genomic_DNA"/>
</dbReference>
<dbReference type="PIR" id="AG0212">
    <property type="entry name" value="AG0212"/>
</dbReference>
<dbReference type="RefSeq" id="WP_002221007.1">
    <property type="nucleotide sequence ID" value="NZ_WUCM01000019.1"/>
</dbReference>
<dbReference type="RefSeq" id="YP_002346744.1">
    <property type="nucleotide sequence ID" value="NC_003143.1"/>
</dbReference>
<dbReference type="SMR" id="Q8D091"/>
<dbReference type="STRING" id="214092.YPO1744"/>
<dbReference type="PaxDb" id="214092-YPO1744"/>
<dbReference type="EnsemblBacteria" id="AAS61724">
    <property type="protein sequence ID" value="AAS61724"/>
    <property type="gene ID" value="YP_1485"/>
</dbReference>
<dbReference type="GeneID" id="57976834"/>
<dbReference type="KEGG" id="ype:YPO1744"/>
<dbReference type="KEGG" id="ypk:y2563"/>
<dbReference type="KEGG" id="ypm:YP_1485"/>
<dbReference type="PATRIC" id="fig|214092.21.peg.2098"/>
<dbReference type="eggNOG" id="ENOG502Z7SY">
    <property type="taxonomic scope" value="Bacteria"/>
</dbReference>
<dbReference type="HOGENOM" id="CLU_104099_0_0_6"/>
<dbReference type="OMA" id="FFAWLRW"/>
<dbReference type="OrthoDB" id="9156803at2"/>
<dbReference type="Proteomes" id="UP000000815">
    <property type="component" value="Chromosome"/>
</dbReference>
<dbReference type="Proteomes" id="UP000001019">
    <property type="component" value="Chromosome"/>
</dbReference>
<dbReference type="Proteomes" id="UP000002490">
    <property type="component" value="Chromosome"/>
</dbReference>
<dbReference type="GO" id="GO:0009279">
    <property type="term" value="C:cell outer membrane"/>
    <property type="evidence" value="ECO:0000250"/>
    <property type="project" value="UniProtKB"/>
</dbReference>
<dbReference type="GO" id="GO:0016416">
    <property type="term" value="F:O-palmitoyltransferase activity"/>
    <property type="evidence" value="ECO:0000250"/>
    <property type="project" value="UniProtKB"/>
</dbReference>
<dbReference type="GO" id="GO:0009245">
    <property type="term" value="P:lipid A biosynthetic process"/>
    <property type="evidence" value="ECO:0000250"/>
    <property type="project" value="UniProtKB"/>
</dbReference>
<dbReference type="FunFam" id="2.40.160.20:FF:000002">
    <property type="entry name" value="Lipid A palmitoyltransferase PagP"/>
    <property type="match status" value="1"/>
</dbReference>
<dbReference type="Gene3D" id="2.40.160.20">
    <property type="match status" value="1"/>
</dbReference>
<dbReference type="HAMAP" id="MF_00837">
    <property type="entry name" value="PagP_transferase"/>
    <property type="match status" value="1"/>
</dbReference>
<dbReference type="InterPro" id="IPR009746">
    <property type="entry name" value="LipidA_acyl_PagP"/>
</dbReference>
<dbReference type="InterPro" id="IPR011250">
    <property type="entry name" value="OMP/PagP_b-brl"/>
</dbReference>
<dbReference type="NCBIfam" id="NF008271">
    <property type="entry name" value="PRK11045.1"/>
    <property type="match status" value="1"/>
</dbReference>
<dbReference type="Pfam" id="PF07017">
    <property type="entry name" value="PagP"/>
    <property type="match status" value="1"/>
</dbReference>
<dbReference type="SUPFAM" id="SSF56925">
    <property type="entry name" value="OMPA-like"/>
    <property type="match status" value="1"/>
</dbReference>
<proteinExistence type="inferred from homology"/>
<feature type="signal peptide" evidence="1">
    <location>
        <begin position="1"/>
        <end position="25"/>
    </location>
</feature>
<feature type="chain" id="PRO_0000414480" description="Lipid A acyltransferase PagP">
    <location>
        <begin position="26"/>
        <end position="199"/>
    </location>
</feature>
<feature type="active site" evidence="1">
    <location>
        <position position="74"/>
    </location>
</feature>
<feature type="active site" evidence="1">
    <location>
        <position position="117"/>
    </location>
</feature>
<feature type="active site" evidence="1">
    <location>
        <position position="118"/>
    </location>
</feature>
<feature type="site" description="Role in lipopolysaccharide recognition" evidence="1">
    <location>
        <position position="83"/>
    </location>
</feature>
<feature type="site" description="Role in the phospholipid gating" evidence="1">
    <location>
        <position position="188"/>
    </location>
</feature>
<name>PAGP_YERPE</name>
<sequence>MNYKDIINACILSGVFLLHSPSALADTPSVGVSKGQESLQPAAEGNLWQRLIRNVSLAWNSPHQELYIPVNTWHNRWTYDDEKIASYNERPWGVGYGKYRYDEDNNWHSVYAMAFMDSHNRVEPILGYGYQKMWIPGEREGWRFGAGFTASITARYEYHYIPLPLPLPLISIEYNRLSLQTTYIPGTYNNGNVLFTWIR</sequence>
<evidence type="ECO:0000255" key="1">
    <source>
        <dbReference type="HAMAP-Rule" id="MF_00837"/>
    </source>
</evidence>
<evidence type="ECO:0000305" key="2"/>
<evidence type="ECO:0000305" key="3">
    <source>
    </source>
</evidence>
<protein>
    <recommendedName>
        <fullName evidence="1">Lipid A acyltransferase PagP</fullName>
        <ecNumber evidence="1">2.3.1.251</ecNumber>
    </recommendedName>
    <alternativeName>
        <fullName evidence="1">Lipid A acylation protein</fullName>
    </alternativeName>
</protein>